<sequence length="323" mass="36406">MKQYLDLVQSILDQGAWQENRTGVRTLSLPGAALRFDLQQGFPAVTTKKLAFKSAIGEMVGFLRATRSAAQFRALGCKVWDQNANENEQWLANPYREGPDDLGPVYGVQWRHWPAYKLLPRSAGGQVADALARGYRQVAEVAENGAPHVLLYKAVDQLRQCLDTIHQSPGDRRILFHGWNWAQIEEMALPPCHLLYQFLPNAGTREISLCLYIRSNDVGLGTPFNLTEGAALLHLVGRLTGYKPRWFSYFIGDAHVYENHLPMLREQLTREPYPAPQLVLSDRIPDFAVTGKYEPQWLEQVEPGDFTLSGYQHHAPLTAPMAV</sequence>
<name>TYSY_BORPA</name>
<keyword id="KW-0963">Cytoplasm</keyword>
<keyword id="KW-0489">Methyltransferase</keyword>
<keyword id="KW-0545">Nucleotide biosynthesis</keyword>
<keyword id="KW-0808">Transferase</keyword>
<dbReference type="EC" id="2.1.1.45" evidence="1"/>
<dbReference type="EMBL" id="BX640425">
    <property type="protein sequence ID" value="CAE40196.1"/>
    <property type="molecule type" value="Genomic_DNA"/>
</dbReference>
<dbReference type="RefSeq" id="WP_003808442.1">
    <property type="nucleotide sequence ID" value="NC_002928.3"/>
</dbReference>
<dbReference type="SMR" id="Q7W1A9"/>
<dbReference type="GeneID" id="93202537"/>
<dbReference type="KEGG" id="bpa:BPP0787"/>
<dbReference type="HOGENOM" id="CLU_021669_0_1_4"/>
<dbReference type="UniPathway" id="UPA00575"/>
<dbReference type="Proteomes" id="UP000001421">
    <property type="component" value="Chromosome"/>
</dbReference>
<dbReference type="GO" id="GO:0005829">
    <property type="term" value="C:cytosol"/>
    <property type="evidence" value="ECO:0007669"/>
    <property type="project" value="TreeGrafter"/>
</dbReference>
<dbReference type="GO" id="GO:0004799">
    <property type="term" value="F:thymidylate synthase activity"/>
    <property type="evidence" value="ECO:0007669"/>
    <property type="project" value="UniProtKB-UniRule"/>
</dbReference>
<dbReference type="GO" id="GO:0006231">
    <property type="term" value="P:dTMP biosynthetic process"/>
    <property type="evidence" value="ECO:0007669"/>
    <property type="project" value="UniProtKB-UniRule"/>
</dbReference>
<dbReference type="GO" id="GO:0006235">
    <property type="term" value="P:dTTP biosynthetic process"/>
    <property type="evidence" value="ECO:0007669"/>
    <property type="project" value="UniProtKB-UniRule"/>
</dbReference>
<dbReference type="GO" id="GO:0032259">
    <property type="term" value="P:methylation"/>
    <property type="evidence" value="ECO:0007669"/>
    <property type="project" value="UniProtKB-KW"/>
</dbReference>
<dbReference type="CDD" id="cd00351">
    <property type="entry name" value="TS_Pyrimidine_HMase"/>
    <property type="match status" value="1"/>
</dbReference>
<dbReference type="Gene3D" id="3.30.572.10">
    <property type="entry name" value="Thymidylate synthase/dCMP hydroxymethylase domain"/>
    <property type="match status" value="1"/>
</dbReference>
<dbReference type="HAMAP" id="MF_00008">
    <property type="entry name" value="Thymidy_synth_bact"/>
    <property type="match status" value="1"/>
</dbReference>
<dbReference type="InterPro" id="IPR045097">
    <property type="entry name" value="Thymidate_synth/dCMP_Mease"/>
</dbReference>
<dbReference type="InterPro" id="IPR023451">
    <property type="entry name" value="Thymidate_synth/dCMP_Mease_dom"/>
</dbReference>
<dbReference type="InterPro" id="IPR036926">
    <property type="entry name" value="Thymidate_synth/dCMP_Mease_sf"/>
</dbReference>
<dbReference type="InterPro" id="IPR000398">
    <property type="entry name" value="Thymidylate_synthase"/>
</dbReference>
<dbReference type="InterPro" id="IPR020940">
    <property type="entry name" value="Thymidylate_synthase_AS"/>
</dbReference>
<dbReference type="NCBIfam" id="NF010393">
    <property type="entry name" value="PRK13821.1"/>
    <property type="match status" value="1"/>
</dbReference>
<dbReference type="NCBIfam" id="TIGR03284">
    <property type="entry name" value="thym_sym"/>
    <property type="match status" value="1"/>
</dbReference>
<dbReference type="PANTHER" id="PTHR11548:SF9">
    <property type="entry name" value="THYMIDYLATE SYNTHASE"/>
    <property type="match status" value="1"/>
</dbReference>
<dbReference type="PANTHER" id="PTHR11548">
    <property type="entry name" value="THYMIDYLATE SYNTHASE 1"/>
    <property type="match status" value="1"/>
</dbReference>
<dbReference type="Pfam" id="PF00303">
    <property type="entry name" value="Thymidylat_synt"/>
    <property type="match status" value="1"/>
</dbReference>
<dbReference type="PRINTS" id="PR00108">
    <property type="entry name" value="THYMDSNTHASE"/>
</dbReference>
<dbReference type="SUPFAM" id="SSF55831">
    <property type="entry name" value="Thymidylate synthase/dCMP hydroxymethylase"/>
    <property type="match status" value="1"/>
</dbReference>
<dbReference type="PROSITE" id="PS00091">
    <property type="entry name" value="THYMIDYLATE_SYNTHASE"/>
    <property type="match status" value="1"/>
</dbReference>
<evidence type="ECO:0000255" key="1">
    <source>
        <dbReference type="HAMAP-Rule" id="MF_00008"/>
    </source>
</evidence>
<gene>
    <name evidence="1" type="primary">thyA</name>
    <name type="ordered locus">BPP0787</name>
</gene>
<feature type="chain" id="PRO_0000140939" description="Thymidylate synthase">
    <location>
        <begin position="1"/>
        <end position="323"/>
    </location>
</feature>
<feature type="active site" description="Nucleophile" evidence="1">
    <location>
        <position position="192"/>
    </location>
</feature>
<feature type="binding site" description="in other chain" evidence="1">
    <location>
        <position position="21"/>
    </location>
    <ligand>
        <name>dUMP</name>
        <dbReference type="ChEBI" id="CHEBI:246422"/>
        <note>ligand shared between dimeric partners</note>
    </ligand>
</feature>
<feature type="binding site" evidence="1">
    <location>
        <begin position="172"/>
        <end position="173"/>
    </location>
    <ligand>
        <name>dUMP</name>
        <dbReference type="ChEBI" id="CHEBI:246422"/>
        <note>ligand shared between dimeric partners</note>
    </ligand>
</feature>
<feature type="binding site" description="in other chain" evidence="1">
    <location>
        <begin position="214"/>
        <end position="217"/>
    </location>
    <ligand>
        <name>dUMP</name>
        <dbReference type="ChEBI" id="CHEBI:246422"/>
        <note>ligand shared between dimeric partners</note>
    </ligand>
</feature>
<feature type="binding site" evidence="1">
    <location>
        <position position="217"/>
    </location>
    <ligand>
        <name>(6R)-5,10-methylene-5,6,7,8-tetrahydrofolate</name>
        <dbReference type="ChEBI" id="CHEBI:15636"/>
    </ligand>
</feature>
<feature type="binding site" description="in other chain" evidence="1">
    <location>
        <position position="225"/>
    </location>
    <ligand>
        <name>dUMP</name>
        <dbReference type="ChEBI" id="CHEBI:246422"/>
        <note>ligand shared between dimeric partners</note>
    </ligand>
</feature>
<feature type="binding site" description="in other chain" evidence="1">
    <location>
        <begin position="255"/>
        <end position="257"/>
    </location>
    <ligand>
        <name>dUMP</name>
        <dbReference type="ChEBI" id="CHEBI:246422"/>
        <note>ligand shared between dimeric partners</note>
    </ligand>
</feature>
<feature type="binding site" evidence="1">
    <location>
        <position position="322"/>
    </location>
    <ligand>
        <name>(6R)-5,10-methylene-5,6,7,8-tetrahydrofolate</name>
        <dbReference type="ChEBI" id="CHEBI:15636"/>
    </ligand>
</feature>
<organism>
    <name type="scientific">Bordetella parapertussis (strain 12822 / ATCC BAA-587 / NCTC 13253)</name>
    <dbReference type="NCBI Taxonomy" id="257311"/>
    <lineage>
        <taxon>Bacteria</taxon>
        <taxon>Pseudomonadati</taxon>
        <taxon>Pseudomonadota</taxon>
        <taxon>Betaproteobacteria</taxon>
        <taxon>Burkholderiales</taxon>
        <taxon>Alcaligenaceae</taxon>
        <taxon>Bordetella</taxon>
    </lineage>
</organism>
<comment type="function">
    <text evidence="1">Catalyzes the reductive methylation of 2'-deoxyuridine-5'-monophosphate (dUMP) to 2'-deoxythymidine-5'-monophosphate (dTMP) while utilizing 5,10-methylenetetrahydrofolate (mTHF) as the methyl donor and reductant in the reaction, yielding dihydrofolate (DHF) as a by-product. This enzymatic reaction provides an intracellular de novo source of dTMP, an essential precursor for DNA biosynthesis.</text>
</comment>
<comment type="catalytic activity">
    <reaction evidence="1">
        <text>dUMP + (6R)-5,10-methylene-5,6,7,8-tetrahydrofolate = 7,8-dihydrofolate + dTMP</text>
        <dbReference type="Rhea" id="RHEA:12104"/>
        <dbReference type="ChEBI" id="CHEBI:15636"/>
        <dbReference type="ChEBI" id="CHEBI:57451"/>
        <dbReference type="ChEBI" id="CHEBI:63528"/>
        <dbReference type="ChEBI" id="CHEBI:246422"/>
        <dbReference type="EC" id="2.1.1.45"/>
    </reaction>
</comment>
<comment type="pathway">
    <text evidence="1">Pyrimidine metabolism; dTTP biosynthesis.</text>
</comment>
<comment type="subunit">
    <text evidence="1">Homodimer.</text>
</comment>
<comment type="subcellular location">
    <subcellularLocation>
        <location evidence="1">Cytoplasm</location>
    </subcellularLocation>
</comment>
<comment type="similarity">
    <text evidence="1">Belongs to the thymidylate synthase family. Bacterial-type ThyA subfamily.</text>
</comment>
<reference key="1">
    <citation type="journal article" date="2003" name="Nat. Genet.">
        <title>Comparative analysis of the genome sequences of Bordetella pertussis, Bordetella parapertussis and Bordetella bronchiseptica.</title>
        <authorList>
            <person name="Parkhill J."/>
            <person name="Sebaihia M."/>
            <person name="Preston A."/>
            <person name="Murphy L.D."/>
            <person name="Thomson N.R."/>
            <person name="Harris D.E."/>
            <person name="Holden M.T.G."/>
            <person name="Churcher C.M."/>
            <person name="Bentley S.D."/>
            <person name="Mungall K.L."/>
            <person name="Cerdeno-Tarraga A.-M."/>
            <person name="Temple L."/>
            <person name="James K.D."/>
            <person name="Harris B."/>
            <person name="Quail M.A."/>
            <person name="Achtman M."/>
            <person name="Atkin R."/>
            <person name="Baker S."/>
            <person name="Basham D."/>
            <person name="Bason N."/>
            <person name="Cherevach I."/>
            <person name="Chillingworth T."/>
            <person name="Collins M."/>
            <person name="Cronin A."/>
            <person name="Davis P."/>
            <person name="Doggett J."/>
            <person name="Feltwell T."/>
            <person name="Goble A."/>
            <person name="Hamlin N."/>
            <person name="Hauser H."/>
            <person name="Holroyd S."/>
            <person name="Jagels K."/>
            <person name="Leather S."/>
            <person name="Moule S."/>
            <person name="Norberczak H."/>
            <person name="O'Neil S."/>
            <person name="Ormond D."/>
            <person name="Price C."/>
            <person name="Rabbinowitsch E."/>
            <person name="Rutter S."/>
            <person name="Sanders M."/>
            <person name="Saunders D."/>
            <person name="Seeger K."/>
            <person name="Sharp S."/>
            <person name="Simmonds M."/>
            <person name="Skelton J."/>
            <person name="Squares R."/>
            <person name="Squares S."/>
            <person name="Stevens K."/>
            <person name="Unwin L."/>
            <person name="Whitehead S."/>
            <person name="Barrell B.G."/>
            <person name="Maskell D.J."/>
        </authorList>
    </citation>
    <scope>NUCLEOTIDE SEQUENCE [LARGE SCALE GENOMIC DNA]</scope>
    <source>
        <strain>12822 / ATCC BAA-587 / NCTC 13253</strain>
    </source>
</reference>
<protein>
    <recommendedName>
        <fullName evidence="1">Thymidylate synthase</fullName>
        <shortName evidence="1">TS</shortName>
        <shortName evidence="1">TSase</shortName>
        <ecNumber evidence="1">2.1.1.45</ecNumber>
    </recommendedName>
</protein>
<proteinExistence type="inferred from homology"/>
<accession>Q7W1A9</accession>